<feature type="chain" id="PRO_0000236572" description="Large ribosomal subunit protein bL9">
    <location>
        <begin position="1"/>
        <end position="148"/>
    </location>
</feature>
<proteinExistence type="inferred from homology"/>
<accession>Q3KIX5</accession>
<gene>
    <name evidence="1" type="primary">rplI</name>
    <name type="ordered locus">Pfl01_0537</name>
</gene>
<organism>
    <name type="scientific">Pseudomonas fluorescens (strain Pf0-1)</name>
    <dbReference type="NCBI Taxonomy" id="205922"/>
    <lineage>
        <taxon>Bacteria</taxon>
        <taxon>Pseudomonadati</taxon>
        <taxon>Pseudomonadota</taxon>
        <taxon>Gammaproteobacteria</taxon>
        <taxon>Pseudomonadales</taxon>
        <taxon>Pseudomonadaceae</taxon>
        <taxon>Pseudomonas</taxon>
    </lineage>
</organism>
<name>RL9_PSEPF</name>
<protein>
    <recommendedName>
        <fullName evidence="1">Large ribosomal subunit protein bL9</fullName>
    </recommendedName>
    <alternativeName>
        <fullName evidence="2">50S ribosomal protein L9</fullName>
    </alternativeName>
</protein>
<reference key="1">
    <citation type="journal article" date="2009" name="Genome Biol.">
        <title>Genomic and genetic analyses of diversity and plant interactions of Pseudomonas fluorescens.</title>
        <authorList>
            <person name="Silby M.W."/>
            <person name="Cerdeno-Tarraga A.M."/>
            <person name="Vernikos G.S."/>
            <person name="Giddens S.R."/>
            <person name="Jackson R.W."/>
            <person name="Preston G.M."/>
            <person name="Zhang X.-X."/>
            <person name="Moon C.D."/>
            <person name="Gehrig S.M."/>
            <person name="Godfrey S.A.C."/>
            <person name="Knight C.G."/>
            <person name="Malone J.G."/>
            <person name="Robinson Z."/>
            <person name="Spiers A.J."/>
            <person name="Harris S."/>
            <person name="Challis G.L."/>
            <person name="Yaxley A.M."/>
            <person name="Harris D."/>
            <person name="Seeger K."/>
            <person name="Murphy L."/>
            <person name="Rutter S."/>
            <person name="Squares R."/>
            <person name="Quail M.A."/>
            <person name="Saunders E."/>
            <person name="Mavromatis K."/>
            <person name="Brettin T.S."/>
            <person name="Bentley S.D."/>
            <person name="Hothersall J."/>
            <person name="Stephens E."/>
            <person name="Thomas C.M."/>
            <person name="Parkhill J."/>
            <person name="Levy S.B."/>
            <person name="Rainey P.B."/>
            <person name="Thomson N.R."/>
        </authorList>
    </citation>
    <scope>NUCLEOTIDE SEQUENCE [LARGE SCALE GENOMIC DNA]</scope>
    <source>
        <strain>Pf0-1</strain>
    </source>
</reference>
<dbReference type="EMBL" id="CP000094">
    <property type="protein sequence ID" value="ABA72281.1"/>
    <property type="molecule type" value="Genomic_DNA"/>
</dbReference>
<dbReference type="RefSeq" id="WP_003186385.1">
    <property type="nucleotide sequence ID" value="NC_007492.2"/>
</dbReference>
<dbReference type="SMR" id="Q3KIX5"/>
<dbReference type="GeneID" id="93487259"/>
<dbReference type="KEGG" id="pfo:Pfl01_0537"/>
<dbReference type="eggNOG" id="COG0359">
    <property type="taxonomic scope" value="Bacteria"/>
</dbReference>
<dbReference type="HOGENOM" id="CLU_078938_4_1_6"/>
<dbReference type="Proteomes" id="UP000002704">
    <property type="component" value="Chromosome"/>
</dbReference>
<dbReference type="GO" id="GO:1990904">
    <property type="term" value="C:ribonucleoprotein complex"/>
    <property type="evidence" value="ECO:0007669"/>
    <property type="project" value="UniProtKB-KW"/>
</dbReference>
<dbReference type="GO" id="GO:0005840">
    <property type="term" value="C:ribosome"/>
    <property type="evidence" value="ECO:0007669"/>
    <property type="project" value="UniProtKB-KW"/>
</dbReference>
<dbReference type="GO" id="GO:0019843">
    <property type="term" value="F:rRNA binding"/>
    <property type="evidence" value="ECO:0007669"/>
    <property type="project" value="UniProtKB-UniRule"/>
</dbReference>
<dbReference type="GO" id="GO:0003735">
    <property type="term" value="F:structural constituent of ribosome"/>
    <property type="evidence" value="ECO:0007669"/>
    <property type="project" value="InterPro"/>
</dbReference>
<dbReference type="GO" id="GO:0006412">
    <property type="term" value="P:translation"/>
    <property type="evidence" value="ECO:0007669"/>
    <property type="project" value="UniProtKB-UniRule"/>
</dbReference>
<dbReference type="Gene3D" id="3.10.430.100">
    <property type="entry name" value="Ribosomal protein L9, C-terminal domain"/>
    <property type="match status" value="1"/>
</dbReference>
<dbReference type="Gene3D" id="3.40.5.10">
    <property type="entry name" value="Ribosomal protein L9, N-terminal domain"/>
    <property type="match status" value="1"/>
</dbReference>
<dbReference type="HAMAP" id="MF_00503">
    <property type="entry name" value="Ribosomal_bL9"/>
    <property type="match status" value="1"/>
</dbReference>
<dbReference type="InterPro" id="IPR000244">
    <property type="entry name" value="Ribosomal_bL9"/>
</dbReference>
<dbReference type="InterPro" id="IPR009027">
    <property type="entry name" value="Ribosomal_bL9/RNase_H1_N"/>
</dbReference>
<dbReference type="InterPro" id="IPR020594">
    <property type="entry name" value="Ribosomal_bL9_bac/chp"/>
</dbReference>
<dbReference type="InterPro" id="IPR020069">
    <property type="entry name" value="Ribosomal_bL9_C"/>
</dbReference>
<dbReference type="InterPro" id="IPR036791">
    <property type="entry name" value="Ribosomal_bL9_C_sf"/>
</dbReference>
<dbReference type="InterPro" id="IPR020070">
    <property type="entry name" value="Ribosomal_bL9_N"/>
</dbReference>
<dbReference type="InterPro" id="IPR036935">
    <property type="entry name" value="Ribosomal_bL9_N_sf"/>
</dbReference>
<dbReference type="NCBIfam" id="TIGR00158">
    <property type="entry name" value="L9"/>
    <property type="match status" value="1"/>
</dbReference>
<dbReference type="PANTHER" id="PTHR21368">
    <property type="entry name" value="50S RIBOSOMAL PROTEIN L9"/>
    <property type="match status" value="1"/>
</dbReference>
<dbReference type="Pfam" id="PF03948">
    <property type="entry name" value="Ribosomal_L9_C"/>
    <property type="match status" value="1"/>
</dbReference>
<dbReference type="Pfam" id="PF01281">
    <property type="entry name" value="Ribosomal_L9_N"/>
    <property type="match status" value="1"/>
</dbReference>
<dbReference type="SUPFAM" id="SSF55658">
    <property type="entry name" value="L9 N-domain-like"/>
    <property type="match status" value="1"/>
</dbReference>
<dbReference type="SUPFAM" id="SSF55653">
    <property type="entry name" value="Ribosomal protein L9 C-domain"/>
    <property type="match status" value="1"/>
</dbReference>
<dbReference type="PROSITE" id="PS00651">
    <property type="entry name" value="RIBOSOMAL_L9"/>
    <property type="match status" value="1"/>
</dbReference>
<sequence>MQLILLEKIANLGNLGDKVNVKAGYGRNYLLPFGKATAATAANLAAFEERRAELEKAAADRKASAESRAAQLAELEVTITATAGDEGKLFGSIGTHDIADALTASGVEVAKSEVRLPNGTIRNVGEFDVAVHLHAEVEATVRVVVVAA</sequence>
<keyword id="KW-0687">Ribonucleoprotein</keyword>
<keyword id="KW-0689">Ribosomal protein</keyword>
<keyword id="KW-0694">RNA-binding</keyword>
<keyword id="KW-0699">rRNA-binding</keyword>
<evidence type="ECO:0000255" key="1">
    <source>
        <dbReference type="HAMAP-Rule" id="MF_00503"/>
    </source>
</evidence>
<evidence type="ECO:0000305" key="2"/>
<comment type="function">
    <text evidence="1">Binds to the 23S rRNA.</text>
</comment>
<comment type="similarity">
    <text evidence="1">Belongs to the bacterial ribosomal protein bL9 family.</text>
</comment>